<dbReference type="EC" id="2.8.4.3" evidence="1"/>
<dbReference type="EMBL" id="CP001068">
    <property type="protein sequence ID" value="ACD25566.1"/>
    <property type="molecule type" value="Genomic_DNA"/>
</dbReference>
<dbReference type="SMR" id="B2UFP3"/>
<dbReference type="STRING" id="402626.Rpic_0408"/>
<dbReference type="KEGG" id="rpi:Rpic_0408"/>
<dbReference type="eggNOG" id="COG0621">
    <property type="taxonomic scope" value="Bacteria"/>
</dbReference>
<dbReference type="HOGENOM" id="CLU_018697_2_0_4"/>
<dbReference type="GO" id="GO:0005829">
    <property type="term" value="C:cytosol"/>
    <property type="evidence" value="ECO:0007669"/>
    <property type="project" value="TreeGrafter"/>
</dbReference>
<dbReference type="GO" id="GO:0051539">
    <property type="term" value="F:4 iron, 4 sulfur cluster binding"/>
    <property type="evidence" value="ECO:0007669"/>
    <property type="project" value="UniProtKB-UniRule"/>
</dbReference>
<dbReference type="GO" id="GO:0046872">
    <property type="term" value="F:metal ion binding"/>
    <property type="evidence" value="ECO:0007669"/>
    <property type="project" value="UniProtKB-KW"/>
</dbReference>
<dbReference type="GO" id="GO:0035597">
    <property type="term" value="F:N6-isopentenyladenosine methylthiotransferase activity"/>
    <property type="evidence" value="ECO:0007669"/>
    <property type="project" value="TreeGrafter"/>
</dbReference>
<dbReference type="CDD" id="cd01335">
    <property type="entry name" value="Radical_SAM"/>
    <property type="match status" value="1"/>
</dbReference>
<dbReference type="FunFam" id="3.40.50.12160:FF:000001">
    <property type="entry name" value="tRNA-2-methylthio-N(6)-dimethylallyladenosine synthase"/>
    <property type="match status" value="1"/>
</dbReference>
<dbReference type="FunFam" id="3.80.30.20:FF:000001">
    <property type="entry name" value="tRNA-2-methylthio-N(6)-dimethylallyladenosine synthase 2"/>
    <property type="match status" value="1"/>
</dbReference>
<dbReference type="Gene3D" id="3.40.50.12160">
    <property type="entry name" value="Methylthiotransferase, N-terminal domain"/>
    <property type="match status" value="1"/>
</dbReference>
<dbReference type="Gene3D" id="3.80.30.20">
    <property type="entry name" value="tm_1862 like domain"/>
    <property type="match status" value="1"/>
</dbReference>
<dbReference type="HAMAP" id="MF_01864">
    <property type="entry name" value="tRNA_metthiotr_MiaB"/>
    <property type="match status" value="1"/>
</dbReference>
<dbReference type="InterPro" id="IPR006638">
    <property type="entry name" value="Elp3/MiaA/NifB-like_rSAM"/>
</dbReference>
<dbReference type="InterPro" id="IPR005839">
    <property type="entry name" value="Methylthiotransferase"/>
</dbReference>
<dbReference type="InterPro" id="IPR020612">
    <property type="entry name" value="Methylthiotransferase_CS"/>
</dbReference>
<dbReference type="InterPro" id="IPR013848">
    <property type="entry name" value="Methylthiotransferase_N"/>
</dbReference>
<dbReference type="InterPro" id="IPR038135">
    <property type="entry name" value="Methylthiotransferase_N_sf"/>
</dbReference>
<dbReference type="InterPro" id="IPR006463">
    <property type="entry name" value="MiaB_methiolase"/>
</dbReference>
<dbReference type="InterPro" id="IPR007197">
    <property type="entry name" value="rSAM"/>
</dbReference>
<dbReference type="InterPro" id="IPR023404">
    <property type="entry name" value="rSAM_horseshoe"/>
</dbReference>
<dbReference type="InterPro" id="IPR002792">
    <property type="entry name" value="TRAM_dom"/>
</dbReference>
<dbReference type="NCBIfam" id="TIGR01574">
    <property type="entry name" value="miaB-methiolase"/>
    <property type="match status" value="1"/>
</dbReference>
<dbReference type="NCBIfam" id="TIGR00089">
    <property type="entry name" value="MiaB/RimO family radical SAM methylthiotransferase"/>
    <property type="match status" value="1"/>
</dbReference>
<dbReference type="PANTHER" id="PTHR43020">
    <property type="entry name" value="CDK5 REGULATORY SUBUNIT-ASSOCIATED PROTEIN 1"/>
    <property type="match status" value="1"/>
</dbReference>
<dbReference type="PANTHER" id="PTHR43020:SF2">
    <property type="entry name" value="MITOCHONDRIAL TRNA METHYLTHIOTRANSFERASE CDK5RAP1"/>
    <property type="match status" value="1"/>
</dbReference>
<dbReference type="Pfam" id="PF04055">
    <property type="entry name" value="Radical_SAM"/>
    <property type="match status" value="1"/>
</dbReference>
<dbReference type="Pfam" id="PF01938">
    <property type="entry name" value="TRAM"/>
    <property type="match status" value="1"/>
</dbReference>
<dbReference type="Pfam" id="PF00919">
    <property type="entry name" value="UPF0004"/>
    <property type="match status" value="1"/>
</dbReference>
<dbReference type="SFLD" id="SFLDF00273">
    <property type="entry name" value="(dimethylallyl)adenosine_tRNA"/>
    <property type="match status" value="1"/>
</dbReference>
<dbReference type="SFLD" id="SFLDG01082">
    <property type="entry name" value="B12-binding_domain_containing"/>
    <property type="match status" value="1"/>
</dbReference>
<dbReference type="SFLD" id="SFLDG01061">
    <property type="entry name" value="methylthiotransferase"/>
    <property type="match status" value="1"/>
</dbReference>
<dbReference type="SMART" id="SM00729">
    <property type="entry name" value="Elp3"/>
    <property type="match status" value="1"/>
</dbReference>
<dbReference type="SUPFAM" id="SSF102114">
    <property type="entry name" value="Radical SAM enzymes"/>
    <property type="match status" value="1"/>
</dbReference>
<dbReference type="PROSITE" id="PS51449">
    <property type="entry name" value="MTTASE_N"/>
    <property type="match status" value="1"/>
</dbReference>
<dbReference type="PROSITE" id="PS01278">
    <property type="entry name" value="MTTASE_RADICAL"/>
    <property type="match status" value="1"/>
</dbReference>
<dbReference type="PROSITE" id="PS51918">
    <property type="entry name" value="RADICAL_SAM"/>
    <property type="match status" value="1"/>
</dbReference>
<dbReference type="PROSITE" id="PS50926">
    <property type="entry name" value="TRAM"/>
    <property type="match status" value="1"/>
</dbReference>
<keyword id="KW-0004">4Fe-4S</keyword>
<keyword id="KW-0963">Cytoplasm</keyword>
<keyword id="KW-0408">Iron</keyword>
<keyword id="KW-0411">Iron-sulfur</keyword>
<keyword id="KW-0479">Metal-binding</keyword>
<keyword id="KW-0949">S-adenosyl-L-methionine</keyword>
<keyword id="KW-0808">Transferase</keyword>
<keyword id="KW-0819">tRNA processing</keyword>
<organism>
    <name type="scientific">Ralstonia pickettii (strain 12J)</name>
    <dbReference type="NCBI Taxonomy" id="402626"/>
    <lineage>
        <taxon>Bacteria</taxon>
        <taxon>Pseudomonadati</taxon>
        <taxon>Pseudomonadota</taxon>
        <taxon>Betaproteobacteria</taxon>
        <taxon>Burkholderiales</taxon>
        <taxon>Burkholderiaceae</taxon>
        <taxon>Ralstonia</taxon>
    </lineage>
</organism>
<sequence>MKKVFIKTYGCQMNEYDSDKMSDVLNAAEGLVPTDTPEDADVILFNTCSVREKAQEKVFSELGRVKALKALKPDLVVGVGGCVASQEGASIVARAPYVDVVFGPQTLHRLPDLIAARRRTGRSQVDVSFPEIEKFDHLPPARVDGASAYVSIMEGCSKYCSYCVVPYTRGEEVSRPFDDVLAEVAGLAEQGVREVTLLGQNVNAYIGKMGDTSERADFALLLEYVAEIPGIERIRYTTSHPKEFSSRLIEAYATNPKLVDHLHLPVQHGSDRILMAMKRGYTVLEYKSSIRKLRAIRPNISIATDFIVGFPGETDADFAKTMDLIHEIGYDTSFSFIYSPRPGTPAANLHDDTPQAVKLERLKHLQATIEENVARISQGMVGSVQRILVEGPSRKDPTELHGRTENNRVVNFALPDLPQVRREQLIGQMLDVRIVHAFPHSLRGEVAEERMASAAH</sequence>
<comment type="function">
    <text evidence="1">Catalyzes the methylthiolation of N6-(dimethylallyl)adenosine (i(6)A), leading to the formation of 2-methylthio-N6-(dimethylallyl)adenosine (ms(2)i(6)A) at position 37 in tRNAs that read codons beginning with uridine.</text>
</comment>
<comment type="catalytic activity">
    <reaction evidence="1">
        <text>N(6)-dimethylallyladenosine(37) in tRNA + (sulfur carrier)-SH + AH2 + 2 S-adenosyl-L-methionine = 2-methylsulfanyl-N(6)-dimethylallyladenosine(37) in tRNA + (sulfur carrier)-H + 5'-deoxyadenosine + L-methionine + A + S-adenosyl-L-homocysteine + 2 H(+)</text>
        <dbReference type="Rhea" id="RHEA:37067"/>
        <dbReference type="Rhea" id="RHEA-COMP:10375"/>
        <dbReference type="Rhea" id="RHEA-COMP:10376"/>
        <dbReference type="Rhea" id="RHEA-COMP:14737"/>
        <dbReference type="Rhea" id="RHEA-COMP:14739"/>
        <dbReference type="ChEBI" id="CHEBI:13193"/>
        <dbReference type="ChEBI" id="CHEBI:15378"/>
        <dbReference type="ChEBI" id="CHEBI:17319"/>
        <dbReference type="ChEBI" id="CHEBI:17499"/>
        <dbReference type="ChEBI" id="CHEBI:29917"/>
        <dbReference type="ChEBI" id="CHEBI:57844"/>
        <dbReference type="ChEBI" id="CHEBI:57856"/>
        <dbReference type="ChEBI" id="CHEBI:59789"/>
        <dbReference type="ChEBI" id="CHEBI:64428"/>
        <dbReference type="ChEBI" id="CHEBI:74415"/>
        <dbReference type="ChEBI" id="CHEBI:74417"/>
        <dbReference type="EC" id="2.8.4.3"/>
    </reaction>
</comment>
<comment type="cofactor">
    <cofactor evidence="1">
        <name>[4Fe-4S] cluster</name>
        <dbReference type="ChEBI" id="CHEBI:49883"/>
    </cofactor>
    <text evidence="1">Binds 2 [4Fe-4S] clusters. One cluster is coordinated with 3 cysteines and an exchangeable S-adenosyl-L-methionine.</text>
</comment>
<comment type="subunit">
    <text evidence="1">Monomer.</text>
</comment>
<comment type="subcellular location">
    <subcellularLocation>
        <location evidence="1">Cytoplasm</location>
    </subcellularLocation>
</comment>
<comment type="similarity">
    <text evidence="1">Belongs to the methylthiotransferase family. MiaB subfamily.</text>
</comment>
<gene>
    <name evidence="1" type="primary">miaB</name>
    <name type="ordered locus">Rpic_0408</name>
</gene>
<feature type="chain" id="PRO_0000374478" description="tRNA-2-methylthio-N(6)-dimethylallyladenosine synthase">
    <location>
        <begin position="1"/>
        <end position="456"/>
    </location>
</feature>
<feature type="domain" description="MTTase N-terminal" evidence="1">
    <location>
        <begin position="2"/>
        <end position="119"/>
    </location>
</feature>
<feature type="domain" description="Radical SAM core" evidence="2">
    <location>
        <begin position="142"/>
        <end position="375"/>
    </location>
</feature>
<feature type="domain" description="TRAM" evidence="1">
    <location>
        <begin position="378"/>
        <end position="448"/>
    </location>
</feature>
<feature type="binding site" evidence="1">
    <location>
        <position position="11"/>
    </location>
    <ligand>
        <name>[4Fe-4S] cluster</name>
        <dbReference type="ChEBI" id="CHEBI:49883"/>
        <label>1</label>
    </ligand>
</feature>
<feature type="binding site" evidence="1">
    <location>
        <position position="48"/>
    </location>
    <ligand>
        <name>[4Fe-4S] cluster</name>
        <dbReference type="ChEBI" id="CHEBI:49883"/>
        <label>1</label>
    </ligand>
</feature>
<feature type="binding site" evidence="1">
    <location>
        <position position="82"/>
    </location>
    <ligand>
        <name>[4Fe-4S] cluster</name>
        <dbReference type="ChEBI" id="CHEBI:49883"/>
        <label>1</label>
    </ligand>
</feature>
<feature type="binding site" evidence="1">
    <location>
        <position position="156"/>
    </location>
    <ligand>
        <name>[4Fe-4S] cluster</name>
        <dbReference type="ChEBI" id="CHEBI:49883"/>
        <label>2</label>
        <note>4Fe-4S-S-AdoMet</note>
    </ligand>
</feature>
<feature type="binding site" evidence="1">
    <location>
        <position position="160"/>
    </location>
    <ligand>
        <name>[4Fe-4S] cluster</name>
        <dbReference type="ChEBI" id="CHEBI:49883"/>
        <label>2</label>
        <note>4Fe-4S-S-AdoMet</note>
    </ligand>
</feature>
<feature type="binding site" evidence="1">
    <location>
        <position position="163"/>
    </location>
    <ligand>
        <name>[4Fe-4S] cluster</name>
        <dbReference type="ChEBI" id="CHEBI:49883"/>
        <label>2</label>
        <note>4Fe-4S-S-AdoMet</note>
    </ligand>
</feature>
<protein>
    <recommendedName>
        <fullName evidence="1">tRNA-2-methylthio-N(6)-dimethylallyladenosine synthase</fullName>
        <ecNumber evidence="1">2.8.4.3</ecNumber>
    </recommendedName>
    <alternativeName>
        <fullName evidence="1">(Dimethylallyl)adenosine tRNA methylthiotransferase MiaB</fullName>
    </alternativeName>
    <alternativeName>
        <fullName evidence="1">tRNA-i(6)A37 methylthiotransferase</fullName>
    </alternativeName>
</protein>
<evidence type="ECO:0000255" key="1">
    <source>
        <dbReference type="HAMAP-Rule" id="MF_01864"/>
    </source>
</evidence>
<evidence type="ECO:0000255" key="2">
    <source>
        <dbReference type="PROSITE-ProRule" id="PRU01266"/>
    </source>
</evidence>
<reference key="1">
    <citation type="submission" date="2008-05" db="EMBL/GenBank/DDBJ databases">
        <title>Complete sequence of chromosome 1 of Ralstonia pickettii 12J.</title>
        <authorList>
            <person name="Lucas S."/>
            <person name="Copeland A."/>
            <person name="Lapidus A."/>
            <person name="Glavina del Rio T."/>
            <person name="Dalin E."/>
            <person name="Tice H."/>
            <person name="Bruce D."/>
            <person name="Goodwin L."/>
            <person name="Pitluck S."/>
            <person name="Meincke L."/>
            <person name="Brettin T."/>
            <person name="Detter J.C."/>
            <person name="Han C."/>
            <person name="Kuske C.R."/>
            <person name="Schmutz J."/>
            <person name="Larimer F."/>
            <person name="Land M."/>
            <person name="Hauser L."/>
            <person name="Kyrpides N."/>
            <person name="Mikhailova N."/>
            <person name="Marsh T."/>
            <person name="Richardson P."/>
        </authorList>
    </citation>
    <scope>NUCLEOTIDE SEQUENCE [LARGE SCALE GENOMIC DNA]</scope>
    <source>
        <strain>12J</strain>
    </source>
</reference>
<proteinExistence type="inferred from homology"/>
<name>MIAB_RALPJ</name>
<accession>B2UFP3</accession>